<organism>
    <name type="scientific">Cutibacterium acnes (strain DSM 16379 / KPA171202)</name>
    <name type="common">Propionibacterium acnes</name>
    <dbReference type="NCBI Taxonomy" id="267747"/>
    <lineage>
        <taxon>Bacteria</taxon>
        <taxon>Bacillati</taxon>
        <taxon>Actinomycetota</taxon>
        <taxon>Actinomycetes</taxon>
        <taxon>Propionibacteriales</taxon>
        <taxon>Propionibacteriaceae</taxon>
        <taxon>Cutibacterium</taxon>
    </lineage>
</organism>
<accession>Q6A8I8</accession>
<evidence type="ECO:0000255" key="1">
    <source>
        <dbReference type="HAMAP-Rule" id="MF_00036"/>
    </source>
</evidence>
<dbReference type="EC" id="6.1.1.7" evidence="1"/>
<dbReference type="EMBL" id="AE017283">
    <property type="protein sequence ID" value="AAT82927.1"/>
    <property type="molecule type" value="Genomic_DNA"/>
</dbReference>
<dbReference type="RefSeq" id="WP_002516801.1">
    <property type="nucleotide sequence ID" value="NZ_CP025935.1"/>
</dbReference>
<dbReference type="SMR" id="Q6A8I8"/>
<dbReference type="EnsemblBacteria" id="AAT82927">
    <property type="protein sequence ID" value="AAT82927"/>
    <property type="gene ID" value="PPA1178"/>
</dbReference>
<dbReference type="GeneID" id="92857148"/>
<dbReference type="KEGG" id="pac:PPA1178"/>
<dbReference type="PATRIC" id="fig|267747.3.peg.1214"/>
<dbReference type="eggNOG" id="COG0013">
    <property type="taxonomic scope" value="Bacteria"/>
</dbReference>
<dbReference type="HOGENOM" id="CLU_004485_1_1_11"/>
<dbReference type="Proteomes" id="UP000000603">
    <property type="component" value="Chromosome"/>
</dbReference>
<dbReference type="GO" id="GO:0005829">
    <property type="term" value="C:cytosol"/>
    <property type="evidence" value="ECO:0007669"/>
    <property type="project" value="TreeGrafter"/>
</dbReference>
<dbReference type="GO" id="GO:0004813">
    <property type="term" value="F:alanine-tRNA ligase activity"/>
    <property type="evidence" value="ECO:0007669"/>
    <property type="project" value="UniProtKB-UniRule"/>
</dbReference>
<dbReference type="GO" id="GO:0002161">
    <property type="term" value="F:aminoacyl-tRNA deacylase activity"/>
    <property type="evidence" value="ECO:0007669"/>
    <property type="project" value="TreeGrafter"/>
</dbReference>
<dbReference type="GO" id="GO:0005524">
    <property type="term" value="F:ATP binding"/>
    <property type="evidence" value="ECO:0007669"/>
    <property type="project" value="UniProtKB-UniRule"/>
</dbReference>
<dbReference type="GO" id="GO:0000049">
    <property type="term" value="F:tRNA binding"/>
    <property type="evidence" value="ECO:0007669"/>
    <property type="project" value="UniProtKB-KW"/>
</dbReference>
<dbReference type="GO" id="GO:0008270">
    <property type="term" value="F:zinc ion binding"/>
    <property type="evidence" value="ECO:0007669"/>
    <property type="project" value="UniProtKB-UniRule"/>
</dbReference>
<dbReference type="GO" id="GO:0006419">
    <property type="term" value="P:alanyl-tRNA aminoacylation"/>
    <property type="evidence" value="ECO:0007669"/>
    <property type="project" value="UniProtKB-UniRule"/>
</dbReference>
<dbReference type="CDD" id="cd00673">
    <property type="entry name" value="AlaRS_core"/>
    <property type="match status" value="1"/>
</dbReference>
<dbReference type="FunFam" id="3.10.310.40:FF:000001">
    <property type="entry name" value="Alanine--tRNA ligase"/>
    <property type="match status" value="1"/>
</dbReference>
<dbReference type="FunFam" id="3.30.54.20:FF:000001">
    <property type="entry name" value="Alanine--tRNA ligase"/>
    <property type="match status" value="1"/>
</dbReference>
<dbReference type="FunFam" id="3.30.980.10:FF:000004">
    <property type="entry name" value="Alanine--tRNA ligase, cytoplasmic"/>
    <property type="match status" value="1"/>
</dbReference>
<dbReference type="Gene3D" id="2.40.30.130">
    <property type="match status" value="1"/>
</dbReference>
<dbReference type="Gene3D" id="3.10.310.40">
    <property type="match status" value="1"/>
</dbReference>
<dbReference type="Gene3D" id="3.30.54.20">
    <property type="match status" value="1"/>
</dbReference>
<dbReference type="Gene3D" id="6.10.250.550">
    <property type="match status" value="1"/>
</dbReference>
<dbReference type="Gene3D" id="3.30.930.10">
    <property type="entry name" value="Bira Bifunctional Protein, Domain 2"/>
    <property type="match status" value="1"/>
</dbReference>
<dbReference type="Gene3D" id="3.30.980.10">
    <property type="entry name" value="Threonyl-trna Synthetase, Chain A, domain 2"/>
    <property type="match status" value="1"/>
</dbReference>
<dbReference type="HAMAP" id="MF_00036_B">
    <property type="entry name" value="Ala_tRNA_synth_B"/>
    <property type="match status" value="1"/>
</dbReference>
<dbReference type="InterPro" id="IPR045864">
    <property type="entry name" value="aa-tRNA-synth_II/BPL/LPL"/>
</dbReference>
<dbReference type="InterPro" id="IPR002318">
    <property type="entry name" value="Ala-tRNA-lgiase_IIc"/>
</dbReference>
<dbReference type="InterPro" id="IPR018162">
    <property type="entry name" value="Ala-tRNA-ligase_IIc_anticod-bd"/>
</dbReference>
<dbReference type="InterPro" id="IPR018165">
    <property type="entry name" value="Ala-tRNA-synth_IIc_core"/>
</dbReference>
<dbReference type="InterPro" id="IPR018164">
    <property type="entry name" value="Ala-tRNA-synth_IIc_N"/>
</dbReference>
<dbReference type="InterPro" id="IPR050058">
    <property type="entry name" value="Ala-tRNA_ligase"/>
</dbReference>
<dbReference type="InterPro" id="IPR023033">
    <property type="entry name" value="Ala_tRNA_ligase_euk/bac"/>
</dbReference>
<dbReference type="InterPro" id="IPR003156">
    <property type="entry name" value="DHHA1_dom"/>
</dbReference>
<dbReference type="InterPro" id="IPR018163">
    <property type="entry name" value="Thr/Ala-tRNA-synth_IIc_edit"/>
</dbReference>
<dbReference type="InterPro" id="IPR009000">
    <property type="entry name" value="Transl_B-barrel_sf"/>
</dbReference>
<dbReference type="InterPro" id="IPR012947">
    <property type="entry name" value="tRNA_SAD"/>
</dbReference>
<dbReference type="NCBIfam" id="TIGR00344">
    <property type="entry name" value="alaS"/>
    <property type="match status" value="1"/>
</dbReference>
<dbReference type="PANTHER" id="PTHR11777:SF9">
    <property type="entry name" value="ALANINE--TRNA LIGASE, CYTOPLASMIC"/>
    <property type="match status" value="1"/>
</dbReference>
<dbReference type="PANTHER" id="PTHR11777">
    <property type="entry name" value="ALANYL-TRNA SYNTHETASE"/>
    <property type="match status" value="1"/>
</dbReference>
<dbReference type="Pfam" id="PF02272">
    <property type="entry name" value="DHHA1"/>
    <property type="match status" value="1"/>
</dbReference>
<dbReference type="Pfam" id="PF01411">
    <property type="entry name" value="tRNA-synt_2c"/>
    <property type="match status" value="1"/>
</dbReference>
<dbReference type="Pfam" id="PF07973">
    <property type="entry name" value="tRNA_SAD"/>
    <property type="match status" value="1"/>
</dbReference>
<dbReference type="PRINTS" id="PR00980">
    <property type="entry name" value="TRNASYNTHALA"/>
</dbReference>
<dbReference type="SMART" id="SM00863">
    <property type="entry name" value="tRNA_SAD"/>
    <property type="match status" value="1"/>
</dbReference>
<dbReference type="SUPFAM" id="SSF55681">
    <property type="entry name" value="Class II aaRS and biotin synthetases"/>
    <property type="match status" value="1"/>
</dbReference>
<dbReference type="SUPFAM" id="SSF101353">
    <property type="entry name" value="Putative anticodon-binding domain of alanyl-tRNA synthetase (AlaRS)"/>
    <property type="match status" value="1"/>
</dbReference>
<dbReference type="SUPFAM" id="SSF55186">
    <property type="entry name" value="ThrRS/AlaRS common domain"/>
    <property type="match status" value="1"/>
</dbReference>
<dbReference type="SUPFAM" id="SSF50447">
    <property type="entry name" value="Translation proteins"/>
    <property type="match status" value="1"/>
</dbReference>
<dbReference type="PROSITE" id="PS50860">
    <property type="entry name" value="AA_TRNA_LIGASE_II_ALA"/>
    <property type="match status" value="1"/>
</dbReference>
<gene>
    <name evidence="1" type="primary">alaS</name>
    <name type="ordered locus">PPA1178</name>
</gene>
<protein>
    <recommendedName>
        <fullName evidence="1">Alanine--tRNA ligase</fullName>
        <ecNumber evidence="1">6.1.1.7</ecNumber>
    </recommendedName>
    <alternativeName>
        <fullName evidence="1">Alanyl-tRNA synthetase</fullName>
        <shortName evidence="1">AlaRS</shortName>
    </alternativeName>
</protein>
<proteinExistence type="inferred from homology"/>
<reference key="1">
    <citation type="journal article" date="2004" name="Science">
        <title>The complete genome sequence of Propionibacterium acnes, a commensal of human skin.</title>
        <authorList>
            <person name="Brueggemann H."/>
            <person name="Henne A."/>
            <person name="Hoster F."/>
            <person name="Liesegang H."/>
            <person name="Wiezer A."/>
            <person name="Strittmatter A."/>
            <person name="Hujer S."/>
            <person name="Duerre P."/>
            <person name="Gottschalk G."/>
        </authorList>
    </citation>
    <scope>NUCLEOTIDE SEQUENCE [LARGE SCALE GENOMIC DNA]</scope>
    <source>
        <strain>DSM 16379 / KPA171202</strain>
    </source>
</reference>
<keyword id="KW-0030">Aminoacyl-tRNA synthetase</keyword>
<keyword id="KW-0067">ATP-binding</keyword>
<keyword id="KW-0963">Cytoplasm</keyword>
<keyword id="KW-0436">Ligase</keyword>
<keyword id="KW-0479">Metal-binding</keyword>
<keyword id="KW-0547">Nucleotide-binding</keyword>
<keyword id="KW-0648">Protein biosynthesis</keyword>
<keyword id="KW-0694">RNA-binding</keyword>
<keyword id="KW-0820">tRNA-binding</keyword>
<keyword id="KW-0862">Zinc</keyword>
<sequence>MRTAEIGQRFVDFFESKGHTVVPSASLLYNDPTLLFVNAGMVPFKPYLMGTEPSPWKRATSIQKCVRTLDIDEVGKTTRHGTFFQMLGNFSFGDYFKNEAIQYAWELVTKPAEQGGLGFDPASIWVTVLGPGFHPDYPEGDIEAREAWRAAGIPDEQIQGRSLKDNYWHMGVPGPGGPCSEIYIDRGPAYGPDGGPEADEDRYLEIWNLVFETEDLSAVRAKDDFDIAGPLRSLNIDTGAGLERIAYLLQGVDNMYETDQVFPVIEKASEMSGKRYGARHDDDVRLRVVADHVRSGLMLMTDGVTPGNEARGYVLRRLLRRVVRAMRLLGVADPVLPELLSVSRDLMADSFPDVLTQWDRVIGAATAEEDTFRRTLSSGTAMLDAAVVETKASGSKTLSGEKAFQLHDTYGFPIDLTLEMAAEQGLEVDRNKFTALMAEQRARAKADSQAKKGLLTDREAYSQVRALGETPFLGYTDLTVDTTVTGIIANGTSVTAAEPGAVVEIVLAETPFYAEMGGQDSDSGIIRANGIDFEVLDVQRPVPGLIVHKVHLDGDLAVGDRVTALVNPATRFGACQAHTATHVIHAALRELVGPSATQAGSYNKPGYLRFDFSATKGLSDSLKDEIEERCNVAIHDDFEVTDTQMPLEDAKAMGAMAMFGEKYPPIVRVVELAGPWSRELCGGTHVASTGRIGMLSLLGEQSVGSGTRRVEALVSTDAFRHMAAERALVNELTGILKVQPDQLADRVSKLAADLKEAERKLGAARTRELLGQVDDIVAGTTPAGSFDLVAAKVPGVAGSDLRTLAAEIRARVKDRPAVVTLIGGTHDKPAMIVATTESARAAGAKAGALIKVGVAPIGGRGGGKDDMAQGAGSDPTGIDAALRAVNTELTAL</sequence>
<feature type="chain" id="PRO_0000075175" description="Alanine--tRNA ligase">
    <location>
        <begin position="1"/>
        <end position="892"/>
    </location>
</feature>
<feature type="binding site" evidence="1">
    <location>
        <position position="578"/>
    </location>
    <ligand>
        <name>Zn(2+)</name>
        <dbReference type="ChEBI" id="CHEBI:29105"/>
    </ligand>
</feature>
<feature type="binding site" evidence="1">
    <location>
        <position position="582"/>
    </location>
    <ligand>
        <name>Zn(2+)</name>
        <dbReference type="ChEBI" id="CHEBI:29105"/>
    </ligand>
</feature>
<feature type="binding site" evidence="1">
    <location>
        <position position="681"/>
    </location>
    <ligand>
        <name>Zn(2+)</name>
        <dbReference type="ChEBI" id="CHEBI:29105"/>
    </ligand>
</feature>
<feature type="binding site" evidence="1">
    <location>
        <position position="685"/>
    </location>
    <ligand>
        <name>Zn(2+)</name>
        <dbReference type="ChEBI" id="CHEBI:29105"/>
    </ligand>
</feature>
<comment type="function">
    <text evidence="1">Catalyzes the attachment of alanine to tRNA(Ala) in a two-step reaction: alanine is first activated by ATP to form Ala-AMP and then transferred to the acceptor end of tRNA(Ala). Also edits incorrectly charged Ser-tRNA(Ala) and Gly-tRNA(Ala) via its editing domain.</text>
</comment>
<comment type="catalytic activity">
    <reaction evidence="1">
        <text>tRNA(Ala) + L-alanine + ATP = L-alanyl-tRNA(Ala) + AMP + diphosphate</text>
        <dbReference type="Rhea" id="RHEA:12540"/>
        <dbReference type="Rhea" id="RHEA-COMP:9657"/>
        <dbReference type="Rhea" id="RHEA-COMP:9923"/>
        <dbReference type="ChEBI" id="CHEBI:30616"/>
        <dbReference type="ChEBI" id="CHEBI:33019"/>
        <dbReference type="ChEBI" id="CHEBI:57972"/>
        <dbReference type="ChEBI" id="CHEBI:78442"/>
        <dbReference type="ChEBI" id="CHEBI:78497"/>
        <dbReference type="ChEBI" id="CHEBI:456215"/>
        <dbReference type="EC" id="6.1.1.7"/>
    </reaction>
</comment>
<comment type="cofactor">
    <cofactor evidence="1">
        <name>Zn(2+)</name>
        <dbReference type="ChEBI" id="CHEBI:29105"/>
    </cofactor>
    <text evidence="1">Binds 1 zinc ion per subunit.</text>
</comment>
<comment type="subcellular location">
    <subcellularLocation>
        <location evidence="1">Cytoplasm</location>
    </subcellularLocation>
</comment>
<comment type="domain">
    <text evidence="1">Consists of three domains; the N-terminal catalytic domain, the editing domain and the C-terminal C-Ala domain. The editing domain removes incorrectly charged amino acids, while the C-Ala domain, along with tRNA(Ala), serves as a bridge to cooperatively bring together the editing and aminoacylation centers thus stimulating deacylation of misacylated tRNAs.</text>
</comment>
<comment type="similarity">
    <text evidence="1">Belongs to the class-II aminoacyl-tRNA synthetase family.</text>
</comment>
<name>SYA_CUTAK</name>